<keyword id="KW-0150">Chloroplast</keyword>
<keyword id="KW-0472">Membrane</keyword>
<keyword id="KW-0602">Photosynthesis</keyword>
<keyword id="KW-0603">Photosystem I</keyword>
<keyword id="KW-0934">Plastid</keyword>
<keyword id="KW-0793">Thylakoid</keyword>
<keyword id="KW-0812">Transmembrane</keyword>
<keyword id="KW-1133">Transmembrane helix</keyword>
<protein>
    <recommendedName>
        <fullName evidence="1">Photosystem I reaction center subunit VIII</fullName>
        <shortName evidence="1">PSI-I</shortName>
    </recommendedName>
</protein>
<evidence type="ECO:0000255" key="1">
    <source>
        <dbReference type="HAMAP-Rule" id="MF_00431"/>
    </source>
</evidence>
<sequence length="36" mass="4077">MISAYLPSFFVPLVCLVFPAIAMAFLFVQIEKEEIV</sequence>
<feature type="chain" id="PRO_0000276014" description="Photosystem I reaction center subunit VIII">
    <location>
        <begin position="1"/>
        <end position="36"/>
    </location>
</feature>
<feature type="transmembrane region" description="Helical" evidence="1">
    <location>
        <begin position="8"/>
        <end position="28"/>
    </location>
</feature>
<gene>
    <name evidence="1" type="primary">psaI</name>
</gene>
<geneLocation type="chloroplast"/>
<reference key="1">
    <citation type="journal article" date="2006" name="Mol. Biol. Evol.">
        <title>The chloroplast genome sequence of Chara vulgaris sheds new light into the closest green algal relatives of land plants.</title>
        <authorList>
            <person name="Turmel M."/>
            <person name="Otis C."/>
            <person name="Lemieux C."/>
        </authorList>
    </citation>
    <scope>NUCLEOTIDE SEQUENCE [LARGE SCALE GENOMIC DNA]</scope>
</reference>
<dbReference type="EMBL" id="DQ229107">
    <property type="protein sequence ID" value="ABA61940.1"/>
    <property type="molecule type" value="Genomic_DNA"/>
</dbReference>
<dbReference type="RefSeq" id="YP_635725.1">
    <property type="nucleotide sequence ID" value="NC_008097.1"/>
</dbReference>
<dbReference type="SMR" id="Q1ACM2"/>
<dbReference type="GeneID" id="4100227"/>
<dbReference type="GO" id="GO:0009535">
    <property type="term" value="C:chloroplast thylakoid membrane"/>
    <property type="evidence" value="ECO:0007669"/>
    <property type="project" value="UniProtKB-SubCell"/>
</dbReference>
<dbReference type="GO" id="GO:0009522">
    <property type="term" value="C:photosystem I"/>
    <property type="evidence" value="ECO:0007669"/>
    <property type="project" value="UniProtKB-KW"/>
</dbReference>
<dbReference type="GO" id="GO:0015979">
    <property type="term" value="P:photosynthesis"/>
    <property type="evidence" value="ECO:0007669"/>
    <property type="project" value="UniProtKB-UniRule"/>
</dbReference>
<dbReference type="HAMAP" id="MF_00431">
    <property type="entry name" value="PSI_PsaI"/>
    <property type="match status" value="1"/>
</dbReference>
<dbReference type="InterPro" id="IPR001302">
    <property type="entry name" value="PSI_PsaI"/>
</dbReference>
<dbReference type="InterPro" id="IPR036357">
    <property type="entry name" value="PSI_PsaI_sf"/>
</dbReference>
<dbReference type="NCBIfam" id="TIGR03052">
    <property type="entry name" value="PS_I_psaI"/>
    <property type="match status" value="1"/>
</dbReference>
<dbReference type="PANTHER" id="PTHR35775">
    <property type="match status" value="1"/>
</dbReference>
<dbReference type="PANTHER" id="PTHR35775:SF2">
    <property type="entry name" value="PHOTOSYSTEM I REACTION CENTER SUBUNIT VIII"/>
    <property type="match status" value="1"/>
</dbReference>
<dbReference type="Pfam" id="PF00796">
    <property type="entry name" value="PSI_8"/>
    <property type="match status" value="1"/>
</dbReference>
<dbReference type="SUPFAM" id="SSF81540">
    <property type="entry name" value="Subunit VIII of photosystem I reaction centre, PsaI"/>
    <property type="match status" value="1"/>
</dbReference>
<proteinExistence type="inferred from homology"/>
<accession>Q1ACM2</accession>
<name>PSAI_CHAVU</name>
<organism>
    <name type="scientific">Chara vulgaris</name>
    <name type="common">Common stonewort</name>
    <dbReference type="NCBI Taxonomy" id="55564"/>
    <lineage>
        <taxon>Eukaryota</taxon>
        <taxon>Viridiplantae</taxon>
        <taxon>Streptophyta</taxon>
        <taxon>Charophyceae</taxon>
        <taxon>Charales</taxon>
        <taxon>Characeae</taxon>
        <taxon>Chara</taxon>
    </lineage>
</organism>
<comment type="function">
    <text evidence="1">May help in the organization of the PsaL subunit.</text>
</comment>
<comment type="subcellular location">
    <subcellularLocation>
        <location evidence="1">Plastid</location>
        <location evidence="1">Chloroplast thylakoid membrane</location>
        <topology evidence="1">Single-pass membrane protein</topology>
    </subcellularLocation>
</comment>
<comment type="similarity">
    <text evidence="1">Belongs to the PsaI family.</text>
</comment>